<sequence length="213" mass="22894">MAKNYYDITLALAGICQSARLVQQLAHQGHCDADALHVSLNSIIDMNPSSTLAVFGGSEANLRVGLETLLGVLNASSCQGLNAELTRYTLSLMVLERKLSSAKGALDTLGNRINGLQRQLEHFDLQSETLMSAMAAIYVDVISPLGPRIQVTGSPAVLQSPQVQAKVRATLLAGIRAAVLWHQVGGGRLQLMFSRNRLTTQAKQILAHLTPEL</sequence>
<proteinExistence type="inferred from homology"/>
<name>HFLD_SHIF8</name>
<organism>
    <name type="scientific">Shigella flexneri serotype 5b (strain 8401)</name>
    <dbReference type="NCBI Taxonomy" id="373384"/>
    <lineage>
        <taxon>Bacteria</taxon>
        <taxon>Pseudomonadati</taxon>
        <taxon>Pseudomonadota</taxon>
        <taxon>Gammaproteobacteria</taxon>
        <taxon>Enterobacterales</taxon>
        <taxon>Enterobacteriaceae</taxon>
        <taxon>Shigella</taxon>
    </lineage>
</organism>
<protein>
    <recommendedName>
        <fullName evidence="1">High frequency lysogenization protein HflD homolog</fullName>
    </recommendedName>
</protein>
<gene>
    <name evidence="1" type="primary">hflD</name>
    <name type="ordered locus">SFV_1167</name>
</gene>
<dbReference type="EMBL" id="CP000266">
    <property type="protein sequence ID" value="ABF03375.1"/>
    <property type="molecule type" value="Genomic_DNA"/>
</dbReference>
<dbReference type="RefSeq" id="WP_005047980.1">
    <property type="nucleotide sequence ID" value="NC_008258.1"/>
</dbReference>
<dbReference type="SMR" id="Q0T5P0"/>
<dbReference type="KEGG" id="sfv:SFV_1167"/>
<dbReference type="HOGENOM" id="CLU_098920_0_0_6"/>
<dbReference type="Proteomes" id="UP000000659">
    <property type="component" value="Chromosome"/>
</dbReference>
<dbReference type="GO" id="GO:0005737">
    <property type="term" value="C:cytoplasm"/>
    <property type="evidence" value="ECO:0007669"/>
    <property type="project" value="UniProtKB-SubCell"/>
</dbReference>
<dbReference type="GO" id="GO:0005886">
    <property type="term" value="C:plasma membrane"/>
    <property type="evidence" value="ECO:0007669"/>
    <property type="project" value="UniProtKB-SubCell"/>
</dbReference>
<dbReference type="FunFam" id="1.10.3890.10:FF:000001">
    <property type="entry name" value="High frequency lysogenization protein HflD homolog"/>
    <property type="match status" value="1"/>
</dbReference>
<dbReference type="Gene3D" id="1.10.3890.10">
    <property type="entry name" value="HflD-like"/>
    <property type="match status" value="1"/>
</dbReference>
<dbReference type="HAMAP" id="MF_00695">
    <property type="entry name" value="HflD_protein"/>
    <property type="match status" value="1"/>
</dbReference>
<dbReference type="InterPro" id="IPR007451">
    <property type="entry name" value="HflD"/>
</dbReference>
<dbReference type="InterPro" id="IPR035932">
    <property type="entry name" value="HflD-like_sf"/>
</dbReference>
<dbReference type="NCBIfam" id="NF001245">
    <property type="entry name" value="PRK00218.1-1"/>
    <property type="match status" value="1"/>
</dbReference>
<dbReference type="NCBIfam" id="NF001246">
    <property type="entry name" value="PRK00218.1-2"/>
    <property type="match status" value="1"/>
</dbReference>
<dbReference type="NCBIfam" id="NF001248">
    <property type="entry name" value="PRK00218.1-4"/>
    <property type="match status" value="1"/>
</dbReference>
<dbReference type="NCBIfam" id="NF001249">
    <property type="entry name" value="PRK00218.1-5"/>
    <property type="match status" value="1"/>
</dbReference>
<dbReference type="PANTHER" id="PTHR38100">
    <property type="entry name" value="HIGH FREQUENCY LYSOGENIZATION PROTEIN HFLD"/>
    <property type="match status" value="1"/>
</dbReference>
<dbReference type="PANTHER" id="PTHR38100:SF1">
    <property type="entry name" value="HIGH FREQUENCY LYSOGENIZATION PROTEIN HFLD"/>
    <property type="match status" value="1"/>
</dbReference>
<dbReference type="Pfam" id="PF04356">
    <property type="entry name" value="DUF489"/>
    <property type="match status" value="1"/>
</dbReference>
<dbReference type="SUPFAM" id="SSF101322">
    <property type="entry name" value="YcfC-like"/>
    <property type="match status" value="1"/>
</dbReference>
<comment type="subcellular location">
    <subcellularLocation>
        <location>Cytoplasm</location>
    </subcellularLocation>
    <subcellularLocation>
        <location evidence="1">Cell inner membrane</location>
        <topology evidence="1">Peripheral membrane protein</topology>
        <orientation evidence="1">Cytoplasmic side</orientation>
    </subcellularLocation>
</comment>
<comment type="similarity">
    <text evidence="1">Belongs to the HflD family.</text>
</comment>
<accession>Q0T5P0</accession>
<evidence type="ECO:0000255" key="1">
    <source>
        <dbReference type="HAMAP-Rule" id="MF_00695"/>
    </source>
</evidence>
<reference key="1">
    <citation type="journal article" date="2006" name="BMC Genomics">
        <title>Complete genome sequence of Shigella flexneri 5b and comparison with Shigella flexneri 2a.</title>
        <authorList>
            <person name="Nie H."/>
            <person name="Yang F."/>
            <person name="Zhang X."/>
            <person name="Yang J."/>
            <person name="Chen L."/>
            <person name="Wang J."/>
            <person name="Xiong Z."/>
            <person name="Peng J."/>
            <person name="Sun L."/>
            <person name="Dong J."/>
            <person name="Xue Y."/>
            <person name="Xu X."/>
            <person name="Chen S."/>
            <person name="Yao Z."/>
            <person name="Shen Y."/>
            <person name="Jin Q."/>
        </authorList>
    </citation>
    <scope>NUCLEOTIDE SEQUENCE [LARGE SCALE GENOMIC DNA]</scope>
    <source>
        <strain>8401</strain>
    </source>
</reference>
<feature type="chain" id="PRO_1000045448" description="High frequency lysogenization protein HflD homolog">
    <location>
        <begin position="1"/>
        <end position="213"/>
    </location>
</feature>
<feature type="coiled-coil region" evidence="1">
    <location>
        <begin position="79"/>
        <end position="126"/>
    </location>
</feature>
<keyword id="KW-0997">Cell inner membrane</keyword>
<keyword id="KW-1003">Cell membrane</keyword>
<keyword id="KW-0175">Coiled coil</keyword>
<keyword id="KW-0963">Cytoplasm</keyword>
<keyword id="KW-0472">Membrane</keyword>